<proteinExistence type="inferred from homology"/>
<keyword id="KW-0963">Cytoplasm</keyword>
<keyword id="KW-0378">Hydrolase</keyword>
<keyword id="KW-0694">RNA-binding</keyword>
<keyword id="KW-0820">tRNA-binding</keyword>
<sequence length="149" mass="16010">MRAVVQRVKKARVTVAGEEIATIGPGLLVFLGVGQQDGPADVEYLADKIAGLRIFADEDGKMNLSVRDTGGEVLAVSQFTLYGDCRKGRRPSFTAAAPPEQALNLYRQFVAALAARGLKVATGRFQADMLVALENDGPVTMLLDSQRLF</sequence>
<accession>Q2RHV8</accession>
<protein>
    <recommendedName>
        <fullName evidence="1">D-aminoacyl-tRNA deacylase</fullName>
        <shortName evidence="1">DTD</shortName>
        <ecNumber evidence="1">3.1.1.96</ecNumber>
    </recommendedName>
    <alternativeName>
        <fullName evidence="1">Gly-tRNA(Ala) deacylase</fullName>
    </alternativeName>
</protein>
<dbReference type="EC" id="3.1.1.96" evidence="1"/>
<dbReference type="EMBL" id="CP000232">
    <property type="protein sequence ID" value="ABC19981.1"/>
    <property type="molecule type" value="Genomic_DNA"/>
</dbReference>
<dbReference type="RefSeq" id="YP_430524.1">
    <property type="nucleotide sequence ID" value="NC_007644.1"/>
</dbReference>
<dbReference type="SMR" id="Q2RHV8"/>
<dbReference type="STRING" id="264732.Moth_1679"/>
<dbReference type="EnsemblBacteria" id="ABC19981">
    <property type="protein sequence ID" value="ABC19981"/>
    <property type="gene ID" value="Moth_1679"/>
</dbReference>
<dbReference type="KEGG" id="mta:Moth_1679"/>
<dbReference type="PATRIC" id="fig|264732.11.peg.1819"/>
<dbReference type="eggNOG" id="COG1490">
    <property type="taxonomic scope" value="Bacteria"/>
</dbReference>
<dbReference type="HOGENOM" id="CLU_076901_1_0_9"/>
<dbReference type="OrthoDB" id="9801395at2"/>
<dbReference type="GO" id="GO:0005737">
    <property type="term" value="C:cytoplasm"/>
    <property type="evidence" value="ECO:0007669"/>
    <property type="project" value="UniProtKB-SubCell"/>
</dbReference>
<dbReference type="GO" id="GO:0051500">
    <property type="term" value="F:D-tyrosyl-tRNA(Tyr) deacylase activity"/>
    <property type="evidence" value="ECO:0007669"/>
    <property type="project" value="TreeGrafter"/>
</dbReference>
<dbReference type="GO" id="GO:0106026">
    <property type="term" value="F:Gly-tRNA(Ala) deacylase activity"/>
    <property type="evidence" value="ECO:0007669"/>
    <property type="project" value="UniProtKB-UniRule"/>
</dbReference>
<dbReference type="GO" id="GO:0043908">
    <property type="term" value="F:Ser(Gly)-tRNA(Ala) hydrolase activity"/>
    <property type="evidence" value="ECO:0007669"/>
    <property type="project" value="UniProtKB-UniRule"/>
</dbReference>
<dbReference type="GO" id="GO:0000049">
    <property type="term" value="F:tRNA binding"/>
    <property type="evidence" value="ECO:0007669"/>
    <property type="project" value="UniProtKB-UniRule"/>
</dbReference>
<dbReference type="GO" id="GO:0019478">
    <property type="term" value="P:D-amino acid catabolic process"/>
    <property type="evidence" value="ECO:0007669"/>
    <property type="project" value="UniProtKB-UniRule"/>
</dbReference>
<dbReference type="CDD" id="cd00563">
    <property type="entry name" value="Dtyr_deacylase"/>
    <property type="match status" value="1"/>
</dbReference>
<dbReference type="FunFam" id="3.50.80.10:FF:000001">
    <property type="entry name" value="D-aminoacyl-tRNA deacylase"/>
    <property type="match status" value="1"/>
</dbReference>
<dbReference type="Gene3D" id="3.50.80.10">
    <property type="entry name" value="D-tyrosyl-tRNA(Tyr) deacylase"/>
    <property type="match status" value="1"/>
</dbReference>
<dbReference type="HAMAP" id="MF_00518">
    <property type="entry name" value="Deacylase_Dtd"/>
    <property type="match status" value="1"/>
</dbReference>
<dbReference type="InterPro" id="IPR003732">
    <property type="entry name" value="Daa-tRNA_deacyls_DTD"/>
</dbReference>
<dbReference type="InterPro" id="IPR023509">
    <property type="entry name" value="DTD-like_sf"/>
</dbReference>
<dbReference type="NCBIfam" id="TIGR00256">
    <property type="entry name" value="D-aminoacyl-tRNA deacylase"/>
    <property type="match status" value="1"/>
</dbReference>
<dbReference type="PANTHER" id="PTHR10472:SF5">
    <property type="entry name" value="D-AMINOACYL-TRNA DEACYLASE 1"/>
    <property type="match status" value="1"/>
</dbReference>
<dbReference type="PANTHER" id="PTHR10472">
    <property type="entry name" value="D-TYROSYL-TRNA TYR DEACYLASE"/>
    <property type="match status" value="1"/>
</dbReference>
<dbReference type="Pfam" id="PF02580">
    <property type="entry name" value="Tyr_Deacylase"/>
    <property type="match status" value="1"/>
</dbReference>
<dbReference type="SUPFAM" id="SSF69500">
    <property type="entry name" value="DTD-like"/>
    <property type="match status" value="1"/>
</dbReference>
<organism>
    <name type="scientific">Moorella thermoacetica (strain ATCC 39073 / JCM 9320)</name>
    <dbReference type="NCBI Taxonomy" id="264732"/>
    <lineage>
        <taxon>Bacteria</taxon>
        <taxon>Bacillati</taxon>
        <taxon>Bacillota</taxon>
        <taxon>Clostridia</taxon>
        <taxon>Moorellales</taxon>
        <taxon>Moorellaceae</taxon>
        <taxon>Moorella</taxon>
    </lineage>
</organism>
<gene>
    <name evidence="1" type="primary">dtd</name>
    <name type="ordered locus">Moth_1679</name>
</gene>
<feature type="chain" id="PRO_0000259291" description="D-aminoacyl-tRNA deacylase">
    <location>
        <begin position="1"/>
        <end position="149"/>
    </location>
</feature>
<feature type="short sequence motif" description="Gly-cisPro motif, important for rejection of L-amino acids" evidence="1">
    <location>
        <begin position="137"/>
        <end position="138"/>
    </location>
</feature>
<comment type="function">
    <text evidence="1">An aminoacyl-tRNA editing enzyme that deacylates mischarged D-aminoacyl-tRNAs. Also deacylates mischarged glycyl-tRNA(Ala), protecting cells against glycine mischarging by AlaRS. Acts via tRNA-based rather than protein-based catalysis; rejects L-amino acids rather than detecting D-amino acids in the active site. By recycling D-aminoacyl-tRNA to D-amino acids and free tRNA molecules, this enzyme counteracts the toxicity associated with the formation of D-aminoacyl-tRNA entities in vivo and helps enforce protein L-homochirality.</text>
</comment>
<comment type="catalytic activity">
    <reaction evidence="1">
        <text>glycyl-tRNA(Ala) + H2O = tRNA(Ala) + glycine + H(+)</text>
        <dbReference type="Rhea" id="RHEA:53744"/>
        <dbReference type="Rhea" id="RHEA-COMP:9657"/>
        <dbReference type="Rhea" id="RHEA-COMP:13640"/>
        <dbReference type="ChEBI" id="CHEBI:15377"/>
        <dbReference type="ChEBI" id="CHEBI:15378"/>
        <dbReference type="ChEBI" id="CHEBI:57305"/>
        <dbReference type="ChEBI" id="CHEBI:78442"/>
        <dbReference type="ChEBI" id="CHEBI:78522"/>
        <dbReference type="EC" id="3.1.1.96"/>
    </reaction>
</comment>
<comment type="catalytic activity">
    <reaction evidence="1">
        <text>a D-aminoacyl-tRNA + H2O = a tRNA + a D-alpha-amino acid + H(+)</text>
        <dbReference type="Rhea" id="RHEA:13953"/>
        <dbReference type="Rhea" id="RHEA-COMP:10123"/>
        <dbReference type="Rhea" id="RHEA-COMP:10124"/>
        <dbReference type="ChEBI" id="CHEBI:15377"/>
        <dbReference type="ChEBI" id="CHEBI:15378"/>
        <dbReference type="ChEBI" id="CHEBI:59871"/>
        <dbReference type="ChEBI" id="CHEBI:78442"/>
        <dbReference type="ChEBI" id="CHEBI:79333"/>
        <dbReference type="EC" id="3.1.1.96"/>
    </reaction>
</comment>
<comment type="subunit">
    <text evidence="1">Homodimer.</text>
</comment>
<comment type="subcellular location">
    <subcellularLocation>
        <location evidence="1">Cytoplasm</location>
    </subcellularLocation>
</comment>
<comment type="domain">
    <text evidence="1">A Gly-cisPro motif from one monomer fits into the active site of the other monomer to allow specific chiral rejection of L-amino acids.</text>
</comment>
<comment type="similarity">
    <text evidence="1">Belongs to the DTD family.</text>
</comment>
<reference key="1">
    <citation type="journal article" date="2008" name="Environ. Microbiol.">
        <title>The complete genome sequence of Moorella thermoacetica (f. Clostridium thermoaceticum).</title>
        <authorList>
            <person name="Pierce E."/>
            <person name="Xie G."/>
            <person name="Barabote R.D."/>
            <person name="Saunders E."/>
            <person name="Han C.S."/>
            <person name="Detter J.C."/>
            <person name="Richardson P."/>
            <person name="Brettin T.S."/>
            <person name="Das A."/>
            <person name="Ljungdahl L.G."/>
            <person name="Ragsdale S.W."/>
        </authorList>
    </citation>
    <scope>NUCLEOTIDE SEQUENCE [LARGE SCALE GENOMIC DNA]</scope>
    <source>
        <strain>ATCC 39073 / JCM 9320</strain>
    </source>
</reference>
<name>DTD_MOOTA</name>
<evidence type="ECO:0000255" key="1">
    <source>
        <dbReference type="HAMAP-Rule" id="MF_00518"/>
    </source>
</evidence>